<comment type="function">
    <text evidence="1">Catalyzes the formation of 6,7-dimethyl-8-ribityllumazine by condensation of 5-amino-6-(D-ribitylamino)uracil with 3,4-dihydroxy-2-butanone 4-phosphate. This is the penultimate step in the biosynthesis of riboflavin.</text>
</comment>
<comment type="catalytic activity">
    <reaction evidence="1">
        <text>(2S)-2-hydroxy-3-oxobutyl phosphate + 5-amino-6-(D-ribitylamino)uracil = 6,7-dimethyl-8-(1-D-ribityl)lumazine + phosphate + 2 H2O + H(+)</text>
        <dbReference type="Rhea" id="RHEA:26152"/>
        <dbReference type="ChEBI" id="CHEBI:15377"/>
        <dbReference type="ChEBI" id="CHEBI:15378"/>
        <dbReference type="ChEBI" id="CHEBI:15934"/>
        <dbReference type="ChEBI" id="CHEBI:43474"/>
        <dbReference type="ChEBI" id="CHEBI:58201"/>
        <dbReference type="ChEBI" id="CHEBI:58830"/>
        <dbReference type="EC" id="2.5.1.78"/>
    </reaction>
</comment>
<comment type="pathway">
    <text evidence="1">Cofactor biosynthesis; riboflavin biosynthesis; riboflavin from 2-hydroxy-3-oxobutyl phosphate and 5-amino-6-(D-ribitylamino)uracil: step 1/2.</text>
</comment>
<comment type="subunit">
    <text evidence="1">Forms an icosahedral capsid composed of 60 subunits, arranged as a dodecamer of pentamers.</text>
</comment>
<comment type="similarity">
    <text evidence="1">Belongs to the DMRL synthase family.</text>
</comment>
<sequence length="153" mass="16275">MVFEGHLVGTELKVGVVVGRFNEFITSKLLGGALDGLKRHGVEEADIDVAWVPGAFEIPLIAKKMANSGKYDAVITLGTVIRGATTHYDYVCNEVAKGVASLSLQTDIPVIFGVLTTETIEQAIERAGTKAGNKGYESAVAAIEMAHLSKQWA</sequence>
<name>RISB_BACCQ</name>
<gene>
    <name evidence="1" type="primary">ribH</name>
    <name type="ordered locus">BCQ_3902</name>
</gene>
<reference key="1">
    <citation type="journal article" date="2009" name="J. Bacteriol.">
        <title>Complete genome sequence of the extremophilic Bacillus cereus strain Q1 with industrial applications.</title>
        <authorList>
            <person name="Xiong Z."/>
            <person name="Jiang Y."/>
            <person name="Qi D."/>
            <person name="Lu H."/>
            <person name="Yang F."/>
            <person name="Yang J."/>
            <person name="Chen L."/>
            <person name="Sun L."/>
            <person name="Xu X."/>
            <person name="Xue Y."/>
            <person name="Zhu Y."/>
            <person name="Jin Q."/>
        </authorList>
    </citation>
    <scope>NUCLEOTIDE SEQUENCE [LARGE SCALE GENOMIC DNA]</scope>
    <source>
        <strain>Q1</strain>
    </source>
</reference>
<protein>
    <recommendedName>
        <fullName evidence="1">6,7-dimethyl-8-ribityllumazine synthase</fullName>
        <shortName evidence="1">DMRL synthase</shortName>
        <shortName evidence="1">LS</shortName>
        <shortName evidence="1">Lumazine synthase</shortName>
        <ecNumber evidence="1">2.5.1.78</ecNumber>
    </recommendedName>
</protein>
<keyword id="KW-0686">Riboflavin biosynthesis</keyword>
<keyword id="KW-0808">Transferase</keyword>
<proteinExistence type="inferred from homology"/>
<organism>
    <name type="scientific">Bacillus cereus (strain Q1)</name>
    <dbReference type="NCBI Taxonomy" id="361100"/>
    <lineage>
        <taxon>Bacteria</taxon>
        <taxon>Bacillati</taxon>
        <taxon>Bacillota</taxon>
        <taxon>Bacilli</taxon>
        <taxon>Bacillales</taxon>
        <taxon>Bacillaceae</taxon>
        <taxon>Bacillus</taxon>
        <taxon>Bacillus cereus group</taxon>
    </lineage>
</organism>
<feature type="chain" id="PRO_1000195462" description="6,7-dimethyl-8-ribityllumazine synthase">
    <location>
        <begin position="1"/>
        <end position="153"/>
    </location>
</feature>
<feature type="active site" description="Proton donor" evidence="1">
    <location>
        <position position="87"/>
    </location>
</feature>
<feature type="binding site" evidence="1">
    <location>
        <position position="21"/>
    </location>
    <ligand>
        <name>5-amino-6-(D-ribitylamino)uracil</name>
        <dbReference type="ChEBI" id="CHEBI:15934"/>
    </ligand>
</feature>
<feature type="binding site" evidence="1">
    <location>
        <begin position="55"/>
        <end position="57"/>
    </location>
    <ligand>
        <name>5-amino-6-(D-ribitylamino)uracil</name>
        <dbReference type="ChEBI" id="CHEBI:15934"/>
    </ligand>
</feature>
<feature type="binding site" evidence="1">
    <location>
        <begin position="79"/>
        <end position="81"/>
    </location>
    <ligand>
        <name>5-amino-6-(D-ribitylamino)uracil</name>
        <dbReference type="ChEBI" id="CHEBI:15934"/>
    </ligand>
</feature>
<feature type="binding site" evidence="1">
    <location>
        <begin position="84"/>
        <end position="85"/>
    </location>
    <ligand>
        <name>(2S)-2-hydroxy-3-oxobutyl phosphate</name>
        <dbReference type="ChEBI" id="CHEBI:58830"/>
    </ligand>
</feature>
<feature type="binding site" evidence="1">
    <location>
        <position position="112"/>
    </location>
    <ligand>
        <name>5-amino-6-(D-ribitylamino)uracil</name>
        <dbReference type="ChEBI" id="CHEBI:15934"/>
    </ligand>
</feature>
<feature type="binding site" evidence="1">
    <location>
        <position position="126"/>
    </location>
    <ligand>
        <name>(2S)-2-hydroxy-3-oxobutyl phosphate</name>
        <dbReference type="ChEBI" id="CHEBI:58830"/>
    </ligand>
</feature>
<accession>B9IWX5</accession>
<evidence type="ECO:0000255" key="1">
    <source>
        <dbReference type="HAMAP-Rule" id="MF_00178"/>
    </source>
</evidence>
<dbReference type="EC" id="2.5.1.78" evidence="1"/>
<dbReference type="EMBL" id="CP000227">
    <property type="protein sequence ID" value="ACM14330.1"/>
    <property type="molecule type" value="Genomic_DNA"/>
</dbReference>
<dbReference type="SMR" id="B9IWX5"/>
<dbReference type="KEGG" id="bcq:BCQ_3902"/>
<dbReference type="HOGENOM" id="CLU_089358_1_1_9"/>
<dbReference type="UniPathway" id="UPA00275">
    <property type="reaction ID" value="UER00404"/>
</dbReference>
<dbReference type="Proteomes" id="UP000000441">
    <property type="component" value="Chromosome"/>
</dbReference>
<dbReference type="GO" id="GO:0005829">
    <property type="term" value="C:cytosol"/>
    <property type="evidence" value="ECO:0007669"/>
    <property type="project" value="TreeGrafter"/>
</dbReference>
<dbReference type="GO" id="GO:0009349">
    <property type="term" value="C:riboflavin synthase complex"/>
    <property type="evidence" value="ECO:0007669"/>
    <property type="project" value="InterPro"/>
</dbReference>
<dbReference type="GO" id="GO:0000906">
    <property type="term" value="F:6,7-dimethyl-8-ribityllumazine synthase activity"/>
    <property type="evidence" value="ECO:0007669"/>
    <property type="project" value="UniProtKB-UniRule"/>
</dbReference>
<dbReference type="GO" id="GO:0009231">
    <property type="term" value="P:riboflavin biosynthetic process"/>
    <property type="evidence" value="ECO:0007669"/>
    <property type="project" value="UniProtKB-UniRule"/>
</dbReference>
<dbReference type="CDD" id="cd09209">
    <property type="entry name" value="Lumazine_synthase-I"/>
    <property type="match status" value="1"/>
</dbReference>
<dbReference type="FunFam" id="3.40.50.960:FF:000001">
    <property type="entry name" value="6,7-dimethyl-8-ribityllumazine synthase"/>
    <property type="match status" value="1"/>
</dbReference>
<dbReference type="Gene3D" id="3.40.50.960">
    <property type="entry name" value="Lumazine/riboflavin synthase"/>
    <property type="match status" value="1"/>
</dbReference>
<dbReference type="HAMAP" id="MF_00178">
    <property type="entry name" value="Lumazine_synth"/>
    <property type="match status" value="1"/>
</dbReference>
<dbReference type="InterPro" id="IPR034964">
    <property type="entry name" value="LS"/>
</dbReference>
<dbReference type="InterPro" id="IPR002180">
    <property type="entry name" value="LS/RS"/>
</dbReference>
<dbReference type="InterPro" id="IPR036467">
    <property type="entry name" value="LS/RS_sf"/>
</dbReference>
<dbReference type="NCBIfam" id="TIGR00114">
    <property type="entry name" value="lumazine-synth"/>
    <property type="match status" value="1"/>
</dbReference>
<dbReference type="NCBIfam" id="NF000812">
    <property type="entry name" value="PRK00061.1-4"/>
    <property type="match status" value="1"/>
</dbReference>
<dbReference type="PANTHER" id="PTHR21058:SF0">
    <property type="entry name" value="6,7-DIMETHYL-8-RIBITYLLUMAZINE SYNTHASE"/>
    <property type="match status" value="1"/>
</dbReference>
<dbReference type="PANTHER" id="PTHR21058">
    <property type="entry name" value="6,7-DIMETHYL-8-RIBITYLLUMAZINE SYNTHASE DMRL SYNTHASE LUMAZINE SYNTHASE"/>
    <property type="match status" value="1"/>
</dbReference>
<dbReference type="Pfam" id="PF00885">
    <property type="entry name" value="DMRL_synthase"/>
    <property type="match status" value="1"/>
</dbReference>
<dbReference type="SUPFAM" id="SSF52121">
    <property type="entry name" value="Lumazine synthase"/>
    <property type="match status" value="1"/>
</dbReference>